<keyword id="KW-0217">Developmental protein</keyword>
<keyword id="KW-0341">Growth regulation</keyword>
<keyword id="KW-0349">Heme</keyword>
<keyword id="KW-0408">Iron</keyword>
<keyword id="KW-0472">Membrane</keyword>
<keyword id="KW-0479">Metal-binding</keyword>
<keyword id="KW-0503">Monooxygenase</keyword>
<keyword id="KW-0560">Oxidoreductase</keyword>
<keyword id="KW-1185">Reference proteome</keyword>
<keyword id="KW-0812">Transmembrane</keyword>
<keyword id="KW-1133">Transmembrane helix</keyword>
<name>C78A7_ARATH</name>
<comment type="function">
    <text evidence="3">Functions probably in association with CYP78A5 in regulating relative growth of the shoot apical meristem and plant organs via a non-cell-autonomous signal.</text>
</comment>
<comment type="cofactor">
    <cofactor evidence="1">
        <name>heme</name>
        <dbReference type="ChEBI" id="CHEBI:30413"/>
    </cofactor>
</comment>
<comment type="subcellular location">
    <subcellularLocation>
        <location evidence="4">Membrane</location>
        <topology evidence="4">Single-pass membrane protein</topology>
    </subcellularLocation>
</comment>
<comment type="disruption phenotype">
    <text evidence="3">No visible phenotype under normal growth conditions.</text>
</comment>
<comment type="similarity">
    <text evidence="4">Belongs to the cytochrome P450 family.</text>
</comment>
<accession>Q9FIB0</accession>
<sequence length="536" mass="59494">MELMNLASKETSYWMIALPAGFGSQNLHDVSTLGYLFLAVVFLSIVTWALAGGGGVAWKNGRNRLGRVAIPGPRGIPVFGSLFTLSRGLAHRTLAAMAWSRANTEIMAFSLGSTPVIVASEPNIAREILMSPHFADRPVKQSAKSLMFSRAIGFAPNGTYWRMLRRIASTHLFAPRRILAHEAGRQLDCAEMVKAVSVEQNGAGSVVLRKHLQLAALNNIMGSVFGRRYDPLAQKEDLDELTSMVREGFELLGAFNWSDYLPWLGYFYDSIRLNQRCSDLVPRIRTLVKKIIDEHRVSNSEKKRDIGDFVDVLLSLDGDEKLQEDDMIAVLWEMIFRGTDTTALLTEWTMAELVLNPNVQTKLRDEILTAVGDGADGDVADADLAKLPYLNAVVKETLRLHPPGPLLSWARLSTSDVQLSNGMVIPKGTTAMVNMWAITHDQTVWSDPLKFDPERFTGNADMDIRGGDLRLAPFGAGRRVCPGKNMGLATVTRWVAELVRRFEWGQDQTEPVDLGEVLKLSCEMEHPLRAVVTEIF</sequence>
<gene>
    <name type="primary">CYP78A7</name>
    <name type="ordered locus">At5g09970</name>
    <name type="ORF">MYH9.18</name>
</gene>
<proteinExistence type="evidence at transcript level"/>
<dbReference type="EC" id="1.14.-.-"/>
<dbReference type="EMBL" id="AB016893">
    <property type="protein sequence ID" value="BAB09418.1"/>
    <property type="molecule type" value="Genomic_DNA"/>
</dbReference>
<dbReference type="EMBL" id="CP002688">
    <property type="protein sequence ID" value="AED91472.1"/>
    <property type="molecule type" value="Genomic_DNA"/>
</dbReference>
<dbReference type="EMBL" id="AY136401">
    <property type="protein sequence ID" value="AAM97067.1"/>
    <property type="molecule type" value="mRNA"/>
</dbReference>
<dbReference type="EMBL" id="BT000225">
    <property type="protein sequence ID" value="AAN15544.1"/>
    <property type="molecule type" value="mRNA"/>
</dbReference>
<dbReference type="EMBL" id="AK227001">
    <property type="protein sequence ID" value="BAE99066.1"/>
    <property type="molecule type" value="mRNA"/>
</dbReference>
<dbReference type="RefSeq" id="NP_196559.1">
    <property type="nucleotide sequence ID" value="NM_121034.2"/>
</dbReference>
<dbReference type="SMR" id="Q9FIB0"/>
<dbReference type="FunCoup" id="Q9FIB0">
    <property type="interactions" value="107"/>
</dbReference>
<dbReference type="STRING" id="3702.Q9FIB0"/>
<dbReference type="iPTMnet" id="Q9FIB0"/>
<dbReference type="PaxDb" id="3702-AT5G09970.1"/>
<dbReference type="ProteomicsDB" id="240580"/>
<dbReference type="EnsemblPlants" id="AT5G09970.1">
    <property type="protein sequence ID" value="AT5G09970.1"/>
    <property type="gene ID" value="AT5G09970"/>
</dbReference>
<dbReference type="GeneID" id="830858"/>
<dbReference type="Gramene" id="AT5G09970.1">
    <property type="protein sequence ID" value="AT5G09970.1"/>
    <property type="gene ID" value="AT5G09970"/>
</dbReference>
<dbReference type="KEGG" id="ath:AT5G09970"/>
<dbReference type="Araport" id="AT5G09970"/>
<dbReference type="TAIR" id="AT5G09970">
    <property type="gene designation" value="CYP78A7"/>
</dbReference>
<dbReference type="eggNOG" id="KOG0156">
    <property type="taxonomic scope" value="Eukaryota"/>
</dbReference>
<dbReference type="HOGENOM" id="CLU_001570_4_0_1"/>
<dbReference type="InParanoid" id="Q9FIB0"/>
<dbReference type="OMA" id="RRFAMTT"/>
<dbReference type="OrthoDB" id="1470350at2759"/>
<dbReference type="PhylomeDB" id="Q9FIB0"/>
<dbReference type="BioCyc" id="ARA:AT5G09970-MONOMER"/>
<dbReference type="PRO" id="PR:Q9FIB0"/>
<dbReference type="Proteomes" id="UP000006548">
    <property type="component" value="Chromosome 5"/>
</dbReference>
<dbReference type="ExpressionAtlas" id="Q9FIB0">
    <property type="expression patterns" value="baseline and differential"/>
</dbReference>
<dbReference type="GO" id="GO:0016020">
    <property type="term" value="C:membrane"/>
    <property type="evidence" value="ECO:0007669"/>
    <property type="project" value="UniProtKB-SubCell"/>
</dbReference>
<dbReference type="GO" id="GO:0020037">
    <property type="term" value="F:heme binding"/>
    <property type="evidence" value="ECO:0007669"/>
    <property type="project" value="InterPro"/>
</dbReference>
<dbReference type="GO" id="GO:0005506">
    <property type="term" value="F:iron ion binding"/>
    <property type="evidence" value="ECO:0007669"/>
    <property type="project" value="InterPro"/>
</dbReference>
<dbReference type="GO" id="GO:0004497">
    <property type="term" value="F:monooxygenase activity"/>
    <property type="evidence" value="ECO:0007669"/>
    <property type="project" value="UniProtKB-KW"/>
</dbReference>
<dbReference type="GO" id="GO:0016705">
    <property type="term" value="F:oxidoreductase activity, acting on paired donors, with incorporation or reduction of molecular oxygen"/>
    <property type="evidence" value="ECO:0007669"/>
    <property type="project" value="InterPro"/>
</dbReference>
<dbReference type="CDD" id="cd11076">
    <property type="entry name" value="CYP78"/>
    <property type="match status" value="1"/>
</dbReference>
<dbReference type="FunFam" id="1.10.630.10:FF:000016">
    <property type="entry name" value="Cytochrome P450 78A5"/>
    <property type="match status" value="1"/>
</dbReference>
<dbReference type="Gene3D" id="1.10.630.10">
    <property type="entry name" value="Cytochrome P450"/>
    <property type="match status" value="1"/>
</dbReference>
<dbReference type="InterPro" id="IPR001128">
    <property type="entry name" value="Cyt_P450"/>
</dbReference>
<dbReference type="InterPro" id="IPR017972">
    <property type="entry name" value="Cyt_P450_CS"/>
</dbReference>
<dbReference type="InterPro" id="IPR002401">
    <property type="entry name" value="Cyt_P450_E_grp-I"/>
</dbReference>
<dbReference type="InterPro" id="IPR036396">
    <property type="entry name" value="Cyt_P450_sf"/>
</dbReference>
<dbReference type="InterPro" id="IPR051996">
    <property type="entry name" value="Cytochrome_P450_78A"/>
</dbReference>
<dbReference type="PANTHER" id="PTHR47946:SF6">
    <property type="entry name" value="CYTOCHROME P450 78A7"/>
    <property type="match status" value="1"/>
</dbReference>
<dbReference type="PANTHER" id="PTHR47946">
    <property type="entry name" value="CYTOCHROME P450 78A7-RELATED"/>
    <property type="match status" value="1"/>
</dbReference>
<dbReference type="Pfam" id="PF00067">
    <property type="entry name" value="p450"/>
    <property type="match status" value="1"/>
</dbReference>
<dbReference type="PRINTS" id="PR00463">
    <property type="entry name" value="EP450I"/>
</dbReference>
<dbReference type="PRINTS" id="PR00385">
    <property type="entry name" value="P450"/>
</dbReference>
<dbReference type="SUPFAM" id="SSF48264">
    <property type="entry name" value="Cytochrome P450"/>
    <property type="match status" value="1"/>
</dbReference>
<dbReference type="PROSITE" id="PS00086">
    <property type="entry name" value="CYTOCHROME_P450"/>
    <property type="match status" value="1"/>
</dbReference>
<evidence type="ECO:0000250" key="1"/>
<evidence type="ECO:0000255" key="2"/>
<evidence type="ECO:0000269" key="3">
    <source>
    </source>
</evidence>
<evidence type="ECO:0000305" key="4"/>
<reference key="1">
    <citation type="journal article" date="1998" name="DNA Res.">
        <title>Structural analysis of Arabidopsis thaliana chromosome 5. VIII. Sequence features of the regions of 1,081,958 bp covered by seventeen physically assigned P1 and TAC clones.</title>
        <authorList>
            <person name="Asamizu E."/>
            <person name="Sato S."/>
            <person name="Kaneko T."/>
            <person name="Nakamura Y."/>
            <person name="Kotani H."/>
            <person name="Miyajima N."/>
            <person name="Tabata S."/>
        </authorList>
    </citation>
    <scope>NUCLEOTIDE SEQUENCE [LARGE SCALE GENOMIC DNA]</scope>
    <source>
        <strain>cv. Columbia</strain>
    </source>
</reference>
<reference key="2">
    <citation type="journal article" date="2017" name="Plant J.">
        <title>Araport11: a complete reannotation of the Arabidopsis thaliana reference genome.</title>
        <authorList>
            <person name="Cheng C.Y."/>
            <person name="Krishnakumar V."/>
            <person name="Chan A.P."/>
            <person name="Thibaud-Nissen F."/>
            <person name="Schobel S."/>
            <person name="Town C.D."/>
        </authorList>
    </citation>
    <scope>GENOME REANNOTATION</scope>
    <source>
        <strain>cv. Columbia</strain>
    </source>
</reference>
<reference key="3">
    <citation type="journal article" date="2003" name="Science">
        <title>Empirical analysis of transcriptional activity in the Arabidopsis genome.</title>
        <authorList>
            <person name="Yamada K."/>
            <person name="Lim J."/>
            <person name="Dale J.M."/>
            <person name="Chen H."/>
            <person name="Shinn P."/>
            <person name="Palm C.J."/>
            <person name="Southwick A.M."/>
            <person name="Wu H.C."/>
            <person name="Kim C.J."/>
            <person name="Nguyen M."/>
            <person name="Pham P.K."/>
            <person name="Cheuk R.F."/>
            <person name="Karlin-Newmann G."/>
            <person name="Liu S.X."/>
            <person name="Lam B."/>
            <person name="Sakano H."/>
            <person name="Wu T."/>
            <person name="Yu G."/>
            <person name="Miranda M."/>
            <person name="Quach H.L."/>
            <person name="Tripp M."/>
            <person name="Chang C.H."/>
            <person name="Lee J.M."/>
            <person name="Toriumi M.J."/>
            <person name="Chan M.M."/>
            <person name="Tang C.C."/>
            <person name="Onodera C.S."/>
            <person name="Deng J.M."/>
            <person name="Akiyama K."/>
            <person name="Ansari Y."/>
            <person name="Arakawa T."/>
            <person name="Banh J."/>
            <person name="Banno F."/>
            <person name="Bowser L."/>
            <person name="Brooks S.Y."/>
            <person name="Carninci P."/>
            <person name="Chao Q."/>
            <person name="Choy N."/>
            <person name="Enju A."/>
            <person name="Goldsmith A.D."/>
            <person name="Gurjal M."/>
            <person name="Hansen N.F."/>
            <person name="Hayashizaki Y."/>
            <person name="Johnson-Hopson C."/>
            <person name="Hsuan V.W."/>
            <person name="Iida K."/>
            <person name="Karnes M."/>
            <person name="Khan S."/>
            <person name="Koesema E."/>
            <person name="Ishida J."/>
            <person name="Jiang P.X."/>
            <person name="Jones T."/>
            <person name="Kawai J."/>
            <person name="Kamiya A."/>
            <person name="Meyers C."/>
            <person name="Nakajima M."/>
            <person name="Narusaka M."/>
            <person name="Seki M."/>
            <person name="Sakurai T."/>
            <person name="Satou M."/>
            <person name="Tamse R."/>
            <person name="Vaysberg M."/>
            <person name="Wallender E.K."/>
            <person name="Wong C."/>
            <person name="Yamamura Y."/>
            <person name="Yuan S."/>
            <person name="Shinozaki K."/>
            <person name="Davis R.W."/>
            <person name="Theologis A."/>
            <person name="Ecker J.R."/>
        </authorList>
    </citation>
    <scope>NUCLEOTIDE SEQUENCE [LARGE SCALE MRNA]</scope>
    <source>
        <strain>cv. Columbia</strain>
    </source>
</reference>
<reference key="4">
    <citation type="submission" date="2006-07" db="EMBL/GenBank/DDBJ databases">
        <title>Large-scale analysis of RIKEN Arabidopsis full-length (RAFL) cDNAs.</title>
        <authorList>
            <person name="Totoki Y."/>
            <person name="Seki M."/>
            <person name="Ishida J."/>
            <person name="Nakajima M."/>
            <person name="Enju A."/>
            <person name="Kamiya A."/>
            <person name="Narusaka M."/>
            <person name="Shin-i T."/>
            <person name="Nakagawa M."/>
            <person name="Sakamoto N."/>
            <person name="Oishi K."/>
            <person name="Kohara Y."/>
            <person name="Kobayashi M."/>
            <person name="Toyoda A."/>
            <person name="Sakaki Y."/>
            <person name="Sakurai T."/>
            <person name="Iida K."/>
            <person name="Akiyama K."/>
            <person name="Satou M."/>
            <person name="Toyoda T."/>
            <person name="Konagaya A."/>
            <person name="Carninci P."/>
            <person name="Kawai J."/>
            <person name="Hayashizaki Y."/>
            <person name="Shinozaki K."/>
        </authorList>
    </citation>
    <scope>NUCLEOTIDE SEQUENCE [LARGE SCALE MRNA]</scope>
    <source>
        <strain>cv. Columbia</strain>
    </source>
</reference>
<reference key="5">
    <citation type="journal article" date="2008" name="Plant Cell">
        <title>Dual effects of miR156-targeted SPL genes and CYP78A5/KLUH on plastochron length and organ size in Arabidopsis thaliana.</title>
        <authorList>
            <person name="Wang J.W."/>
            <person name="Schwab R."/>
            <person name="Czech B."/>
            <person name="Mica E."/>
            <person name="Weigel D."/>
        </authorList>
    </citation>
    <scope>FUNCTION</scope>
    <scope>DISRUPTION PHENOTYPE</scope>
</reference>
<protein>
    <recommendedName>
        <fullName>Cytochrome P450 78A7</fullName>
        <ecNumber>1.14.-.-</ecNumber>
    </recommendedName>
</protein>
<organism>
    <name type="scientific">Arabidopsis thaliana</name>
    <name type="common">Mouse-ear cress</name>
    <dbReference type="NCBI Taxonomy" id="3702"/>
    <lineage>
        <taxon>Eukaryota</taxon>
        <taxon>Viridiplantae</taxon>
        <taxon>Streptophyta</taxon>
        <taxon>Embryophyta</taxon>
        <taxon>Tracheophyta</taxon>
        <taxon>Spermatophyta</taxon>
        <taxon>Magnoliopsida</taxon>
        <taxon>eudicotyledons</taxon>
        <taxon>Gunneridae</taxon>
        <taxon>Pentapetalae</taxon>
        <taxon>rosids</taxon>
        <taxon>malvids</taxon>
        <taxon>Brassicales</taxon>
        <taxon>Brassicaceae</taxon>
        <taxon>Camelineae</taxon>
        <taxon>Arabidopsis</taxon>
    </lineage>
</organism>
<feature type="chain" id="PRO_0000422987" description="Cytochrome P450 78A7">
    <location>
        <begin position="1"/>
        <end position="536"/>
    </location>
</feature>
<feature type="transmembrane region" description="Helical" evidence="2">
    <location>
        <begin position="36"/>
        <end position="56"/>
    </location>
</feature>
<feature type="binding site" description="axial binding residue" evidence="1">
    <location>
        <position position="481"/>
    </location>
    <ligand>
        <name>heme</name>
        <dbReference type="ChEBI" id="CHEBI:30413"/>
    </ligand>
    <ligandPart>
        <name>Fe</name>
        <dbReference type="ChEBI" id="CHEBI:18248"/>
    </ligandPart>
</feature>